<protein>
    <recommendedName>
        <fullName evidence="1">Proline--tRNA ligase</fullName>
        <ecNumber evidence="1">6.1.1.15</ecNumber>
    </recommendedName>
    <alternativeName>
        <fullName evidence="1">Prolyl-tRNA synthetase</fullName>
        <shortName evidence="1">ProRS</shortName>
    </alternativeName>
</protein>
<proteinExistence type="inferred from homology"/>
<keyword id="KW-0030">Aminoacyl-tRNA synthetase</keyword>
<keyword id="KW-0067">ATP-binding</keyword>
<keyword id="KW-0963">Cytoplasm</keyword>
<keyword id="KW-0436">Ligase</keyword>
<keyword id="KW-0547">Nucleotide-binding</keyword>
<keyword id="KW-0648">Protein biosynthesis</keyword>
<keyword id="KW-1185">Reference proteome</keyword>
<dbReference type="EC" id="6.1.1.15" evidence="1"/>
<dbReference type="EMBL" id="CP000510">
    <property type="protein sequence ID" value="ABM04976.1"/>
    <property type="molecule type" value="Genomic_DNA"/>
</dbReference>
<dbReference type="RefSeq" id="WP_011771528.1">
    <property type="nucleotide sequence ID" value="NC_008709.1"/>
</dbReference>
<dbReference type="SMR" id="A1SZR1"/>
<dbReference type="STRING" id="357804.Ping_3289"/>
<dbReference type="KEGG" id="pin:Ping_3289"/>
<dbReference type="eggNOG" id="COG0442">
    <property type="taxonomic scope" value="Bacteria"/>
</dbReference>
<dbReference type="HOGENOM" id="CLU_016739_0_0_6"/>
<dbReference type="OrthoDB" id="9809052at2"/>
<dbReference type="Proteomes" id="UP000000639">
    <property type="component" value="Chromosome"/>
</dbReference>
<dbReference type="GO" id="GO:0005829">
    <property type="term" value="C:cytosol"/>
    <property type="evidence" value="ECO:0007669"/>
    <property type="project" value="TreeGrafter"/>
</dbReference>
<dbReference type="GO" id="GO:0002161">
    <property type="term" value="F:aminoacyl-tRNA deacylase activity"/>
    <property type="evidence" value="ECO:0007669"/>
    <property type="project" value="InterPro"/>
</dbReference>
<dbReference type="GO" id="GO:0005524">
    <property type="term" value="F:ATP binding"/>
    <property type="evidence" value="ECO:0007669"/>
    <property type="project" value="UniProtKB-UniRule"/>
</dbReference>
<dbReference type="GO" id="GO:0004827">
    <property type="term" value="F:proline-tRNA ligase activity"/>
    <property type="evidence" value="ECO:0007669"/>
    <property type="project" value="UniProtKB-UniRule"/>
</dbReference>
<dbReference type="GO" id="GO:0006433">
    <property type="term" value="P:prolyl-tRNA aminoacylation"/>
    <property type="evidence" value="ECO:0007669"/>
    <property type="project" value="UniProtKB-UniRule"/>
</dbReference>
<dbReference type="CDD" id="cd04334">
    <property type="entry name" value="ProRS-INS"/>
    <property type="match status" value="1"/>
</dbReference>
<dbReference type="CDD" id="cd00861">
    <property type="entry name" value="ProRS_anticodon_short"/>
    <property type="match status" value="1"/>
</dbReference>
<dbReference type="CDD" id="cd00779">
    <property type="entry name" value="ProRS_core_prok"/>
    <property type="match status" value="1"/>
</dbReference>
<dbReference type="FunFam" id="3.30.930.10:FF:000043">
    <property type="entry name" value="Proline--tRNA ligase"/>
    <property type="match status" value="1"/>
</dbReference>
<dbReference type="FunFam" id="3.30.930.10:FF:000097">
    <property type="entry name" value="Proline--tRNA ligase"/>
    <property type="match status" value="1"/>
</dbReference>
<dbReference type="FunFam" id="3.40.50.800:FF:000006">
    <property type="entry name" value="Proline--tRNA ligase"/>
    <property type="match status" value="1"/>
</dbReference>
<dbReference type="FunFam" id="3.90.960.10:FF:000001">
    <property type="entry name" value="Proline--tRNA ligase"/>
    <property type="match status" value="1"/>
</dbReference>
<dbReference type="Gene3D" id="3.40.50.800">
    <property type="entry name" value="Anticodon-binding domain"/>
    <property type="match status" value="1"/>
</dbReference>
<dbReference type="Gene3D" id="3.30.930.10">
    <property type="entry name" value="Bira Bifunctional Protein, Domain 2"/>
    <property type="match status" value="2"/>
</dbReference>
<dbReference type="HAMAP" id="MF_01569">
    <property type="entry name" value="Pro_tRNA_synth_type1"/>
    <property type="match status" value="1"/>
</dbReference>
<dbReference type="InterPro" id="IPR002314">
    <property type="entry name" value="aa-tRNA-synt_IIb"/>
</dbReference>
<dbReference type="InterPro" id="IPR006195">
    <property type="entry name" value="aa-tRNA-synth_II"/>
</dbReference>
<dbReference type="InterPro" id="IPR045864">
    <property type="entry name" value="aa-tRNA-synth_II/BPL/LPL"/>
</dbReference>
<dbReference type="InterPro" id="IPR004154">
    <property type="entry name" value="Anticodon-bd"/>
</dbReference>
<dbReference type="InterPro" id="IPR036621">
    <property type="entry name" value="Anticodon-bd_dom_sf"/>
</dbReference>
<dbReference type="InterPro" id="IPR002316">
    <property type="entry name" value="Pro-tRNA-ligase_IIa"/>
</dbReference>
<dbReference type="InterPro" id="IPR004500">
    <property type="entry name" value="Pro-tRNA-synth_IIa_bac-type"/>
</dbReference>
<dbReference type="InterPro" id="IPR023717">
    <property type="entry name" value="Pro-tRNA-Synthase_IIa_type1"/>
</dbReference>
<dbReference type="InterPro" id="IPR050062">
    <property type="entry name" value="Pro-tRNA_synthetase"/>
</dbReference>
<dbReference type="InterPro" id="IPR044140">
    <property type="entry name" value="ProRS_anticodon_short"/>
</dbReference>
<dbReference type="InterPro" id="IPR033730">
    <property type="entry name" value="ProRS_core_prok"/>
</dbReference>
<dbReference type="InterPro" id="IPR036754">
    <property type="entry name" value="YbaK/aa-tRNA-synt-asso_dom_sf"/>
</dbReference>
<dbReference type="InterPro" id="IPR007214">
    <property type="entry name" value="YbaK/aa-tRNA-synth-assoc-dom"/>
</dbReference>
<dbReference type="NCBIfam" id="NF006625">
    <property type="entry name" value="PRK09194.1"/>
    <property type="match status" value="1"/>
</dbReference>
<dbReference type="NCBIfam" id="TIGR00409">
    <property type="entry name" value="proS_fam_II"/>
    <property type="match status" value="1"/>
</dbReference>
<dbReference type="PANTHER" id="PTHR42753">
    <property type="entry name" value="MITOCHONDRIAL RIBOSOME PROTEIN L39/PROLYL-TRNA LIGASE FAMILY MEMBER"/>
    <property type="match status" value="1"/>
</dbReference>
<dbReference type="PANTHER" id="PTHR42753:SF2">
    <property type="entry name" value="PROLINE--TRNA LIGASE"/>
    <property type="match status" value="1"/>
</dbReference>
<dbReference type="Pfam" id="PF03129">
    <property type="entry name" value="HGTP_anticodon"/>
    <property type="match status" value="1"/>
</dbReference>
<dbReference type="Pfam" id="PF00587">
    <property type="entry name" value="tRNA-synt_2b"/>
    <property type="match status" value="1"/>
</dbReference>
<dbReference type="Pfam" id="PF04073">
    <property type="entry name" value="tRNA_edit"/>
    <property type="match status" value="1"/>
</dbReference>
<dbReference type="PIRSF" id="PIRSF001535">
    <property type="entry name" value="ProRS_1"/>
    <property type="match status" value="1"/>
</dbReference>
<dbReference type="PRINTS" id="PR01046">
    <property type="entry name" value="TRNASYNTHPRO"/>
</dbReference>
<dbReference type="SUPFAM" id="SSF52954">
    <property type="entry name" value="Class II aaRS ABD-related"/>
    <property type="match status" value="1"/>
</dbReference>
<dbReference type="SUPFAM" id="SSF55681">
    <property type="entry name" value="Class II aaRS and biotin synthetases"/>
    <property type="match status" value="1"/>
</dbReference>
<dbReference type="SUPFAM" id="SSF55826">
    <property type="entry name" value="YbaK/ProRS associated domain"/>
    <property type="match status" value="1"/>
</dbReference>
<dbReference type="PROSITE" id="PS50862">
    <property type="entry name" value="AA_TRNA_LIGASE_II"/>
    <property type="match status" value="1"/>
</dbReference>
<gene>
    <name evidence="1" type="primary">proS</name>
    <name type="ordered locus">Ping_3289</name>
</gene>
<organism>
    <name type="scientific">Psychromonas ingrahamii (strain DSM 17664 / CCUG 51855 / 37)</name>
    <dbReference type="NCBI Taxonomy" id="357804"/>
    <lineage>
        <taxon>Bacteria</taxon>
        <taxon>Pseudomonadati</taxon>
        <taxon>Pseudomonadota</taxon>
        <taxon>Gammaproteobacteria</taxon>
        <taxon>Alteromonadales</taxon>
        <taxon>Psychromonadaceae</taxon>
        <taxon>Psychromonas</taxon>
    </lineage>
</organism>
<sequence length="571" mass="63135">MRTTNYLLSTQKEAPSDAVIVSHQLMLRAGMIRKLASGLYTWLPTGLRVLRKVETIVREEMERAGGVEVLMPIVQPADLWLETGRWDQYGGELLRIKDRHTRDFVLGPTHEEVITELVRKEVNSYKQLPLNLFQIQTKFRDETRPRFGVMRAREFTMKDAYSFHMDQACLEKTYQKMFDAYCRIFDRLGLEYRPVIADTGSIGGSASHEFHVLAQSGEDAIVFSTESDYAANIEKAEALAPSTVLAAPTAEMGLLDTPNAKTIAELVSKHGIAIEKTVKTLFVKASDQIETELIALIIRGDHELNEIKAENLASVAAPLEFASESEIRALVNAGPGSLGPVSLPVPFIVDRSVAVMSDFSAGANIDNKHYCNINWGRDVELAQVEDLRNVVEGDPSPCGSGTLSMARGIEVGHIFQLGDTYTKAMNAGVLNQQGKNQILTMGCYGIGISRIVAAAIEQNNDKNGIIWNNTLAPFSVVIVPMNMHKSHRVAELAEKYYAELQAAGIEVLFDDRKERPGIMFADAELMGIPHTLVIGDRSLDNGVIEYKDRLSGVKQEVAIDEVINFIKAQLA</sequence>
<feature type="chain" id="PRO_0000288369" description="Proline--tRNA ligase">
    <location>
        <begin position="1"/>
        <end position="571"/>
    </location>
</feature>
<reference key="1">
    <citation type="journal article" date="2008" name="BMC Genomics">
        <title>Genomics of an extreme psychrophile, Psychromonas ingrahamii.</title>
        <authorList>
            <person name="Riley M."/>
            <person name="Staley J.T."/>
            <person name="Danchin A."/>
            <person name="Wang T.Z."/>
            <person name="Brettin T.S."/>
            <person name="Hauser L.J."/>
            <person name="Land M.L."/>
            <person name="Thompson L.S."/>
        </authorList>
    </citation>
    <scope>NUCLEOTIDE SEQUENCE [LARGE SCALE GENOMIC DNA]</scope>
    <source>
        <strain>DSM 17664 / CCUG 51855 / 37</strain>
    </source>
</reference>
<accession>A1SZR1</accession>
<name>SYP_PSYIN</name>
<evidence type="ECO:0000255" key="1">
    <source>
        <dbReference type="HAMAP-Rule" id="MF_01569"/>
    </source>
</evidence>
<comment type="function">
    <text evidence="1">Catalyzes the attachment of proline to tRNA(Pro) in a two-step reaction: proline is first activated by ATP to form Pro-AMP and then transferred to the acceptor end of tRNA(Pro). As ProRS can inadvertently accommodate and process non-cognate amino acids such as alanine and cysteine, to avoid such errors it has two additional distinct editing activities against alanine. One activity is designated as 'pretransfer' editing and involves the tRNA(Pro)-independent hydrolysis of activated Ala-AMP. The other activity is designated 'posttransfer' editing and involves deacylation of mischarged Ala-tRNA(Pro). The misacylated Cys-tRNA(Pro) is not edited by ProRS.</text>
</comment>
<comment type="catalytic activity">
    <reaction evidence="1">
        <text>tRNA(Pro) + L-proline + ATP = L-prolyl-tRNA(Pro) + AMP + diphosphate</text>
        <dbReference type="Rhea" id="RHEA:14305"/>
        <dbReference type="Rhea" id="RHEA-COMP:9700"/>
        <dbReference type="Rhea" id="RHEA-COMP:9702"/>
        <dbReference type="ChEBI" id="CHEBI:30616"/>
        <dbReference type="ChEBI" id="CHEBI:33019"/>
        <dbReference type="ChEBI" id="CHEBI:60039"/>
        <dbReference type="ChEBI" id="CHEBI:78442"/>
        <dbReference type="ChEBI" id="CHEBI:78532"/>
        <dbReference type="ChEBI" id="CHEBI:456215"/>
        <dbReference type="EC" id="6.1.1.15"/>
    </reaction>
</comment>
<comment type="subunit">
    <text evidence="1">Homodimer.</text>
</comment>
<comment type="subcellular location">
    <subcellularLocation>
        <location evidence="1">Cytoplasm</location>
    </subcellularLocation>
</comment>
<comment type="domain">
    <text evidence="1">Consists of three domains: the N-terminal catalytic domain, the editing domain and the C-terminal anticodon-binding domain.</text>
</comment>
<comment type="similarity">
    <text evidence="1">Belongs to the class-II aminoacyl-tRNA synthetase family. ProS type 1 subfamily.</text>
</comment>